<sequence length="949" mass="104224">MSGLEDIKNETVDLEKIPIEEVFQQLKCTREGLTTQEGEDRIVIFGPNKLEEKKESKILKFLGFMWNPLSWVMEAAALMAIALANGDNRPPDWQDFVGIICLLVINSTISFIEENNAGNAAAALMAGLAPKTKVLRDGKWSEQEAAILVPGDIVSIKLGDIIPADARLLEGDPLKVDQSALTGESLPVTKHPGQEVFSGSTCKQGEIEAVVIATGVHTFFGKAAHLVDSTNQVGHFQKVLTSIGNFCICSIAIGIAIEIVVMYPIQHRKYRDGIDNLLVLLIGGIPIAMPTVLSVTMAIGSHRLSQQGAITKRMTAIEEMAGMDVLCSDKTGTLTLNKLSVDKNLVEVFCKGVEKDQVLLFAAMASRVENQDAIDAAMVGMLADPKEARAGIREVHFLPFNPVDKRTALTYIDSDGNWHRVSKGAPEQILDLANARPDLRKKVLSCIDKYAERGLRSLAVARQVVPEKTKESPGGPWEFVGLLPLFDPPRHDSAETIRRALNLGVNVKMITGDQLAIGKETGRRLGMGTNMYPSAALLGTDKDSNIASIPVEELIEKADGFAGVFPEHKYEIVKKLQERKHIVGMTGDGVNDAPALKKADIGIAVADATDAARGASDIVLTEPGLSVIISAVLTSRAIFQRMKNYTIYAVSITIRIVFGFMLIALIWEFDFSAFMVLIIAILNDGTIMTISKDRVKPSPTPDSWKLKEIFATGIVLGGYQAIMSVIFFWAAHKTDFFSDKFGVRSIRDNNDELMGAVYLQVSIISQALIFVTRSRSWSFVERPGALLMIAFVIAQLVATLIAVYADWTFAKVKGIGWGWAGVIWIYSIVTYFPQDILKFAIRYILSGKAWASLFDNRTAFTTKKDYGIGEREAQWAQAQRTLHGLQPKEDVNIFPEKGSYRELSEIAEQAKRRAEIARLRELHTLKGHVESVAKLKGLDIDTAGHHYTV</sequence>
<gene>
    <name evidence="14" type="primary">AHA1</name>
    <name evidence="20" type="ordered locus">At2g18960</name>
    <name evidence="21" type="ORF">F19F24.16</name>
</gene>
<organism>
    <name type="scientific">Arabidopsis thaliana</name>
    <name type="common">Mouse-ear cress</name>
    <dbReference type="NCBI Taxonomy" id="3702"/>
    <lineage>
        <taxon>Eukaryota</taxon>
        <taxon>Viridiplantae</taxon>
        <taxon>Streptophyta</taxon>
        <taxon>Embryophyta</taxon>
        <taxon>Tracheophyta</taxon>
        <taxon>Spermatophyta</taxon>
        <taxon>Magnoliopsida</taxon>
        <taxon>eudicotyledons</taxon>
        <taxon>Gunneridae</taxon>
        <taxon>Pentapetalae</taxon>
        <taxon>rosids</taxon>
        <taxon>malvids</taxon>
        <taxon>Brassicales</taxon>
        <taxon>Brassicaceae</taxon>
        <taxon>Camelineae</taxon>
        <taxon>Arabidopsis</taxon>
    </lineage>
</organism>
<keyword id="KW-0007">Acetylation</keyword>
<keyword id="KW-0067">ATP-binding</keyword>
<keyword id="KW-1003">Cell membrane</keyword>
<keyword id="KW-0375">Hydrogen ion transport</keyword>
<keyword id="KW-0406">Ion transport</keyword>
<keyword id="KW-0460">Magnesium</keyword>
<keyword id="KW-0472">Membrane</keyword>
<keyword id="KW-0479">Metal-binding</keyword>
<keyword id="KW-0547">Nucleotide-binding</keyword>
<keyword id="KW-0597">Phosphoprotein</keyword>
<keyword id="KW-1185">Reference proteome</keyword>
<keyword id="KW-1278">Translocase</keyword>
<keyword id="KW-0812">Transmembrane</keyword>
<keyword id="KW-1133">Transmembrane helix</keyword>
<keyword id="KW-0813">Transport</keyword>
<protein>
    <recommendedName>
        <fullName evidence="14">ATPase 1, plasma membrane-type</fullName>
        <shortName evidence="19">PM H(+)-ATPase 1</shortName>
        <shortName evidence="19">Plasma membrane-type ATPase 1</shortName>
        <ecNumber evidence="17">7.1.2.1</ecNumber>
    </recommendedName>
    <alternativeName>
        <fullName>Proton pump 1</fullName>
    </alternativeName>
</protein>
<reference key="1">
    <citation type="journal article" date="1989" name="Proc. Natl. Acad. Sci. U.S.A.">
        <title>Molecular cloning and sequence of cDNA encoding the plasma membrane proton pump (H+-ATPase) of Arabidopsis thaliana.</title>
        <authorList>
            <person name="Harper J.F."/>
            <person name="Surowy T.K."/>
            <person name="Sussman M.R."/>
        </authorList>
    </citation>
    <scope>NUCLEOTIDE SEQUENCE [MRNA]</scope>
    <source>
        <strain>cv. Columbia</strain>
    </source>
</reference>
<reference key="2">
    <citation type="journal article" date="1999" name="Nature">
        <title>Sequence and analysis of chromosome 2 of the plant Arabidopsis thaliana.</title>
        <authorList>
            <person name="Lin X."/>
            <person name="Kaul S."/>
            <person name="Rounsley S.D."/>
            <person name="Shea T.P."/>
            <person name="Benito M.-I."/>
            <person name="Town C.D."/>
            <person name="Fujii C.Y."/>
            <person name="Mason T.M."/>
            <person name="Bowman C.L."/>
            <person name="Barnstead M.E."/>
            <person name="Feldblyum T.V."/>
            <person name="Buell C.R."/>
            <person name="Ketchum K.A."/>
            <person name="Lee J.J."/>
            <person name="Ronning C.M."/>
            <person name="Koo H.L."/>
            <person name="Moffat K.S."/>
            <person name="Cronin L.A."/>
            <person name="Shen M."/>
            <person name="Pai G."/>
            <person name="Van Aken S."/>
            <person name="Umayam L."/>
            <person name="Tallon L.J."/>
            <person name="Gill J.E."/>
            <person name="Adams M.D."/>
            <person name="Carrera A.J."/>
            <person name="Creasy T.H."/>
            <person name="Goodman H.M."/>
            <person name="Somerville C.R."/>
            <person name="Copenhaver G.P."/>
            <person name="Preuss D."/>
            <person name="Nierman W.C."/>
            <person name="White O."/>
            <person name="Eisen J.A."/>
            <person name="Salzberg S.L."/>
            <person name="Fraser C.M."/>
            <person name="Venter J.C."/>
        </authorList>
    </citation>
    <scope>NUCLEOTIDE SEQUENCE [LARGE SCALE GENOMIC DNA]</scope>
    <source>
        <strain>cv. Columbia</strain>
    </source>
</reference>
<reference key="3">
    <citation type="journal article" date="2017" name="Plant J.">
        <title>Araport11: a complete reannotation of the Arabidopsis thaliana reference genome.</title>
        <authorList>
            <person name="Cheng C.Y."/>
            <person name="Krishnakumar V."/>
            <person name="Chan A.P."/>
            <person name="Thibaud-Nissen F."/>
            <person name="Schobel S."/>
            <person name="Town C.D."/>
        </authorList>
    </citation>
    <scope>GENOME REANNOTATION</scope>
    <source>
        <strain>cv. Columbia</strain>
    </source>
</reference>
<reference key="4">
    <citation type="journal article" date="2003" name="Science">
        <title>Empirical analysis of transcriptional activity in the Arabidopsis genome.</title>
        <authorList>
            <person name="Yamada K."/>
            <person name="Lim J."/>
            <person name="Dale J.M."/>
            <person name="Chen H."/>
            <person name="Shinn P."/>
            <person name="Palm C.J."/>
            <person name="Southwick A.M."/>
            <person name="Wu H.C."/>
            <person name="Kim C.J."/>
            <person name="Nguyen M."/>
            <person name="Pham P.K."/>
            <person name="Cheuk R.F."/>
            <person name="Karlin-Newmann G."/>
            <person name="Liu S.X."/>
            <person name="Lam B."/>
            <person name="Sakano H."/>
            <person name="Wu T."/>
            <person name="Yu G."/>
            <person name="Miranda M."/>
            <person name="Quach H.L."/>
            <person name="Tripp M."/>
            <person name="Chang C.H."/>
            <person name="Lee J.M."/>
            <person name="Toriumi M.J."/>
            <person name="Chan M.M."/>
            <person name="Tang C.C."/>
            <person name="Onodera C.S."/>
            <person name="Deng J.M."/>
            <person name="Akiyama K."/>
            <person name="Ansari Y."/>
            <person name="Arakawa T."/>
            <person name="Banh J."/>
            <person name="Banno F."/>
            <person name="Bowser L."/>
            <person name="Brooks S.Y."/>
            <person name="Carninci P."/>
            <person name="Chao Q."/>
            <person name="Choy N."/>
            <person name="Enju A."/>
            <person name="Goldsmith A.D."/>
            <person name="Gurjal M."/>
            <person name="Hansen N.F."/>
            <person name="Hayashizaki Y."/>
            <person name="Johnson-Hopson C."/>
            <person name="Hsuan V.W."/>
            <person name="Iida K."/>
            <person name="Karnes M."/>
            <person name="Khan S."/>
            <person name="Koesema E."/>
            <person name="Ishida J."/>
            <person name="Jiang P.X."/>
            <person name="Jones T."/>
            <person name="Kawai J."/>
            <person name="Kamiya A."/>
            <person name="Meyers C."/>
            <person name="Nakajima M."/>
            <person name="Narusaka M."/>
            <person name="Seki M."/>
            <person name="Sakurai T."/>
            <person name="Satou M."/>
            <person name="Tamse R."/>
            <person name="Vaysberg M."/>
            <person name="Wallender E.K."/>
            <person name="Wong C."/>
            <person name="Yamamura Y."/>
            <person name="Yuan S."/>
            <person name="Shinozaki K."/>
            <person name="Davis R.W."/>
            <person name="Theologis A."/>
            <person name="Ecker J.R."/>
        </authorList>
    </citation>
    <scope>NUCLEOTIDE SEQUENCE [LARGE SCALE MRNA]</scope>
    <source>
        <strain>cv. Columbia</strain>
    </source>
</reference>
<reference key="5">
    <citation type="journal article" date="2002" name="Plant J.">
        <title>A novel interaction partner for the C-terminus of Arabidopsis thaliana plasma membrane H+-ATPase (AHA1 isoform): site and mechanism of action on H+-ATPase activity differ from those of 14-3-3 proteins.</title>
        <authorList>
            <person name="Morandini P."/>
            <person name="Valera M."/>
            <person name="Albumi C."/>
            <person name="Bonza M.C."/>
            <person name="Giacometti S."/>
            <person name="Ravera G."/>
            <person name="Murgia I."/>
            <person name="Soave C."/>
            <person name="De Michelis M.I."/>
        </authorList>
    </citation>
    <scope>INTERACTION WITH PPI1</scope>
    <source>
        <strain>cv. Landsberg erecta</strain>
        <tissue>Leaf</tissue>
        <tissue>Root</tissue>
    </source>
</reference>
<reference key="6">
    <citation type="journal article" date="2003" name="Mol. Cell. Proteomics">
        <title>Large-scale analysis of in vivo phosphorylated membrane proteins by immobilized metal ion affinity chromatography and mass spectrometry.</title>
        <authorList>
            <person name="Nuehse T.S."/>
            <person name="Stensballe A."/>
            <person name="Jensen O.N."/>
            <person name="Peck S.C."/>
        </authorList>
    </citation>
    <scope>IDENTIFICATION BY MASS SPECTROMETRY [LARGE SCALE ANALYSIS]</scope>
    <source>
        <strain>cv. La-0</strain>
    </source>
</reference>
<reference key="7">
    <citation type="journal article" date="2004" name="Plant Cell">
        <title>Phosphoproteomics of the Arabidopsis plasma membrane and a new phosphorylation site database.</title>
        <authorList>
            <person name="Nuehse T.S."/>
            <person name="Stensballe A."/>
            <person name="Jensen O.N."/>
            <person name="Peck S.C."/>
        </authorList>
    </citation>
    <scope>SUBCELLULAR LOCATION</scope>
</reference>
<reference key="8">
    <citation type="journal article" date="2005" name="FEBS J.">
        <title>Characterization of the interaction between the plasma membrane H-ATPase of Arabidopsis thaliana and a novel interactor (PPI1).</title>
        <authorList>
            <person name="Viotti C."/>
            <person name="Luoni L."/>
            <person name="Morandini P."/>
            <person name="De Michelis M.I."/>
        </authorList>
    </citation>
    <scope>INTERACTION WITH PPI1</scope>
</reference>
<reference key="9">
    <citation type="journal article" date="2005" name="Plant Cell Physiol.">
        <title>Biochemical characterization of plasma membrane H+-ATPase activation in guard cell protoplasts of Arabidopsis thaliana in response to blue light.</title>
        <authorList>
            <person name="Ueno K."/>
            <person name="Kinoshita T."/>
            <person name="Inoue S."/>
            <person name="Emi T."/>
            <person name="Shimazaki K."/>
        </authorList>
    </citation>
    <scope>PHOSPHORYLATION BY PHOT1 AND PHOT2 AT THR-948</scope>
    <scope>TISSUE SPECIFICITY</scope>
    <source>
        <strain>cv. Columbia GL1</strain>
    </source>
</reference>
<reference key="10">
    <citation type="journal article" date="2007" name="Mol. Cell. Proteomics">
        <title>Temporal analysis of sucrose-induced phosphorylation changes in plasma membrane proteins of Arabidopsis.</title>
        <authorList>
            <person name="Niittylae T."/>
            <person name="Fuglsang A.T."/>
            <person name="Palmgren M.G."/>
            <person name="Frommer W.B."/>
            <person name="Schulze W.X."/>
        </authorList>
    </citation>
    <scope>IDENTIFICATION BY MASS SPECTROMETRY [LARGE SCALE ANALYSIS]</scope>
    <source>
        <tissue>Seedling</tissue>
    </source>
</reference>
<reference key="11">
    <citation type="journal article" date="2008" name="J. Proteome Res.">
        <title>Site-specific phosphorylation profiling of Arabidopsis proteins by mass spectrometry and peptide chip analysis.</title>
        <authorList>
            <person name="de la Fuente van Bentem S."/>
            <person name="Anrather D."/>
            <person name="Dohnal I."/>
            <person name="Roitinger E."/>
            <person name="Csaszar E."/>
            <person name="Joore J."/>
            <person name="Buijnink J."/>
            <person name="Carreri A."/>
            <person name="Forzani C."/>
            <person name="Lorkovic Z.J."/>
            <person name="Barta A."/>
            <person name="Lecourieux D."/>
            <person name="Verhounig A."/>
            <person name="Jonak C."/>
            <person name="Hirt H."/>
        </authorList>
    </citation>
    <scope>PHOSPHORYLATION [LARGE SCALE ANALYSIS] AT THR-948</scope>
    <scope>IDENTIFICATION BY MASS SPECTROMETRY [LARGE SCALE ANALYSIS]</scope>
    <source>
        <tissue>Root</tissue>
    </source>
</reference>
<reference key="12">
    <citation type="journal article" date="2009" name="J. Proteomics">
        <title>Phosphoproteomic analysis of nuclei-enriched fractions from Arabidopsis thaliana.</title>
        <authorList>
            <person name="Jones A.M.E."/>
            <person name="MacLean D."/>
            <person name="Studholme D.J."/>
            <person name="Serna-Sanz A."/>
            <person name="Andreasson E."/>
            <person name="Rathjen J.P."/>
            <person name="Peck S.C."/>
        </authorList>
    </citation>
    <scope>PHOSPHORYLATION [LARGE SCALE ANALYSIS] AT THR-881</scope>
    <scope>IDENTIFICATION BY MASS SPECTROMETRY [LARGE SCALE ANALYSIS]</scope>
    <source>
        <strain>cv. Columbia</strain>
    </source>
</reference>
<reference key="13">
    <citation type="journal article" date="2009" name="Plant Physiol.">
        <title>Large-scale Arabidopsis phosphoproteome profiling reveals novel chloroplast kinase substrates and phosphorylation networks.</title>
        <authorList>
            <person name="Reiland S."/>
            <person name="Messerli G."/>
            <person name="Baerenfaller K."/>
            <person name="Gerrits B."/>
            <person name="Endler A."/>
            <person name="Grossmann J."/>
            <person name="Gruissem W."/>
            <person name="Baginsky S."/>
        </authorList>
    </citation>
    <scope>IDENTIFICATION BY MASS SPECTROMETRY [LARGE SCALE ANALYSIS]</scope>
</reference>
<reference key="14">
    <citation type="journal article" date="2010" name="J. Biol. Chem.">
        <title>Molecular characterization of mutant Arabidopsis plants with reduced plasma membrane proton pump activity.</title>
        <authorList>
            <person name="Haruta M."/>
            <person name="Burch H.L."/>
            <person name="Nelson R.B."/>
            <person name="Barrett-Wilt G."/>
            <person name="Kline K.G."/>
            <person name="Mohsin S.B."/>
            <person name="Young J.C."/>
            <person name="Otegui M.S."/>
            <person name="Sussman M.R."/>
        </authorList>
    </citation>
    <scope>DISRUPTION PHENOTYPE</scope>
    <scope>DEVELOPMENTAL STAGE</scope>
</reference>
<reference key="15">
    <citation type="journal article" date="2014" name="Plant Cell">
        <title>SAUR inhibition of PP2C-D phosphatases activates plasma membrane H+-ATPases to promote cell expansion in Arabidopsis.</title>
        <authorList>
            <person name="Spartz A.K."/>
            <person name="Ren H."/>
            <person name="Park M.Y."/>
            <person name="Grandt K.N."/>
            <person name="Lee S.H."/>
            <person name="Murphy A.S."/>
            <person name="Sussman M.R."/>
            <person name="Overvoorde P.J."/>
            <person name="Gray W.M."/>
        </authorList>
    </citation>
    <scope>ACTIVITY REGULATION</scope>
    <source>
        <strain>cv. Columbia</strain>
    </source>
</reference>
<reference key="16">
    <citation type="journal article" date="2014" name="Plant J.">
        <title>Receptor kinase-mediated control of primary active proton pumping at the plasma membrane.</title>
        <authorList>
            <person name="Fuglsang A.T."/>
            <person name="Kristensen A."/>
            <person name="Cuin T.A."/>
            <person name="Schulze W.X."/>
            <person name="Persson J."/>
            <person name="Thuesen K.H."/>
            <person name="Ytting C.K."/>
            <person name="Oehlenschlaeger C.B."/>
            <person name="Mahmood K."/>
            <person name="Sondergaard T.E."/>
            <person name="Shabala S."/>
            <person name="Palmgren M.G."/>
        </authorList>
    </citation>
    <scope>INTERACTION WITH PSY1R</scope>
</reference>
<reference key="17">
    <citation type="journal article" date="2015" name="Plant Cell">
        <title>Phytosulfokine regulates growth in Arabidopsis through a response module at the plasma membrane that includes CYCLIC NUCLEOTIDE-GATED CHANNEL17, H+-ATPase, and BAK1.</title>
        <authorList>
            <person name="Ladwig F."/>
            <person name="Dahlke R.I."/>
            <person name="Stuehrwohldt N."/>
            <person name="Hartmann J."/>
            <person name="Harter K."/>
            <person name="Sauter M."/>
        </authorList>
    </citation>
    <scope>FUNCTION</scope>
    <scope>INTERACTION WITH CNGC17 AND PSKR1</scope>
    <scope>SUBCELLULAR LOCATION</scope>
</reference>
<reference key="18">
    <citation type="journal article" date="2017" name="Sci. Rep.">
        <title>A Raf-like protein kinase BHP mediates blue light-dependent stomatal opening.</title>
        <authorList>
            <person name="Hayashi M."/>
            <person name="Inoue S.-I."/>
            <person name="Ueno Y."/>
            <person name="Kinoshita T."/>
        </authorList>
    </citation>
    <scope>FUNCTION</scope>
    <scope>PHOSPHORYLATION</scope>
    <scope>ACTIVITY REGULATION</scope>
    <scope>INTERACTION WITH AHA2</scope>
    <source>
        <strain>cv. Columbia</strain>
    </source>
</reference>
<reference key="19">
    <citation type="journal article" date="2020" name="Photochem. Photobiol. Sci.">
        <title>Raf-like kinases CBC1 and CBC2 negatively regulate stomatal opening by negatively regulating plasma membrane H+-ATPase phosphorylation in Arabidopsis.</title>
        <authorList>
            <person name="Hayashi M."/>
            <person name="Sugimoto H."/>
            <person name="Takahashi H."/>
            <person name="Seki M."/>
            <person name="Shinozaki K."/>
            <person name="Sawasaki T."/>
            <person name="Kinoshita T."/>
            <person name="Inoue S.-I."/>
        </authorList>
    </citation>
    <scope>FUNCTION</scope>
    <scope>PHOSPHORYLATION BY PHOT1 AND PHOT2 AT THR-948</scope>
    <scope>INTERACTION WITH CBC1 AND CBC2</scope>
    <source>
        <strain>cv. Columbia</strain>
    </source>
</reference>
<accession>P20649</accession>
<accession>O64626</accession>
<feature type="initiator methionine" description="Removed" evidence="2">
    <location>
        <position position="1"/>
    </location>
</feature>
<feature type="chain" id="PRO_0000046274" description="ATPase 1, plasma membrane-type">
    <location>
        <begin position="2"/>
        <end position="949"/>
    </location>
</feature>
<feature type="topological domain" description="Cytoplasmic" evidence="3">
    <location>
        <begin position="2"/>
        <end position="61"/>
    </location>
</feature>
<feature type="transmembrane region" description="Helical; Name=1" evidence="3">
    <location>
        <begin position="62"/>
        <end position="81"/>
    </location>
</feature>
<feature type="topological domain" description="Extracellular" evidence="3">
    <location>
        <begin position="82"/>
        <end position="93"/>
    </location>
</feature>
<feature type="transmembrane region" description="Helical; Name=2" evidence="3">
    <location>
        <begin position="94"/>
        <end position="114"/>
    </location>
</feature>
<feature type="topological domain" description="Cytoplasmic" evidence="3">
    <location>
        <begin position="115"/>
        <end position="243"/>
    </location>
</feature>
<feature type="transmembrane region" description="Helical; Name=3" evidence="3">
    <location>
        <begin position="244"/>
        <end position="264"/>
    </location>
</feature>
<feature type="topological domain" description="Extracellular" evidence="3">
    <location>
        <begin position="265"/>
        <end position="273"/>
    </location>
</feature>
<feature type="transmembrane region" description="Helical; Name=4" evidence="3">
    <location>
        <begin position="274"/>
        <end position="291"/>
    </location>
</feature>
<feature type="topological domain" description="Cytoplasmic" evidence="3">
    <location>
        <begin position="292"/>
        <end position="643"/>
    </location>
</feature>
<feature type="transmembrane region" description="Helical; Name=5" evidence="3">
    <location>
        <begin position="644"/>
        <end position="665"/>
    </location>
</feature>
<feature type="topological domain" description="Extracellular" evidence="3">
    <location>
        <begin position="666"/>
        <end position="670"/>
    </location>
</feature>
<feature type="transmembrane region" description="Helical; Name=6" evidence="3">
    <location>
        <begin position="671"/>
        <end position="693"/>
    </location>
</feature>
<feature type="topological domain" description="Cytoplasmic" evidence="3">
    <location>
        <begin position="694"/>
        <end position="709"/>
    </location>
</feature>
<feature type="transmembrane region" description="Helical; Name=7" evidence="3">
    <location>
        <begin position="710"/>
        <end position="730"/>
    </location>
</feature>
<feature type="topological domain" description="Extracellular" evidence="3">
    <location>
        <begin position="731"/>
        <end position="751"/>
    </location>
</feature>
<feature type="transmembrane region" description="Helical; Name=8" evidence="3">
    <location>
        <begin position="752"/>
        <end position="772"/>
    </location>
</feature>
<feature type="topological domain" description="Cytoplasmic" evidence="3">
    <location>
        <begin position="773"/>
        <end position="784"/>
    </location>
</feature>
<feature type="transmembrane region" description="Helical; Name=9" evidence="3">
    <location>
        <begin position="785"/>
        <end position="805"/>
    </location>
</feature>
<feature type="topological domain" description="Extracellular" evidence="3">
    <location>
        <begin position="806"/>
        <end position="813"/>
    </location>
</feature>
<feature type="transmembrane region" description="Helical; Name=10" evidence="3">
    <location>
        <begin position="814"/>
        <end position="834"/>
    </location>
</feature>
<feature type="topological domain" description="Cytoplasmic" evidence="3">
    <location>
        <begin position="835"/>
        <end position="949"/>
    </location>
</feature>
<feature type="region of interest" description="Interaction with 14-3-3 proteins" evidence="1">
    <location>
        <begin position="947"/>
        <end position="949"/>
    </location>
</feature>
<feature type="active site" description="4-aspartylphosphate intermediate" evidence="1">
    <location>
        <position position="329"/>
    </location>
</feature>
<feature type="binding site" evidence="1">
    <location>
        <position position="588"/>
    </location>
    <ligand>
        <name>Mg(2+)</name>
        <dbReference type="ChEBI" id="CHEBI:18420"/>
    </ligand>
</feature>
<feature type="binding site" evidence="1">
    <location>
        <position position="592"/>
    </location>
    <ligand>
        <name>Mg(2+)</name>
        <dbReference type="ChEBI" id="CHEBI:18420"/>
    </ligand>
</feature>
<feature type="modified residue" description="N-acetylserine" evidence="2">
    <location>
        <position position="2"/>
    </location>
</feature>
<feature type="modified residue" description="Phosphothreonine" evidence="23">
    <location>
        <position position="881"/>
    </location>
</feature>
<feature type="modified residue" description="Phosphoserine" evidence="2">
    <location>
        <position position="899"/>
    </location>
</feature>
<feature type="modified residue" description="Phosphoserine" evidence="2">
    <location>
        <position position="931"/>
    </location>
</feature>
<feature type="modified residue" description="Phosphothreonine" evidence="22">
    <location>
        <position position="948"/>
    </location>
</feature>
<feature type="sequence conflict" description="In Ref. 1; AAA32813." evidence="17" ref="1">
    <original>V</original>
    <variation>L</variation>
    <location>
        <position position="771"/>
    </location>
</feature>
<feature type="sequence conflict" description="In Ref. 1; AAA32813." evidence="17" ref="1">
    <original>S</original>
    <variation>Y</variation>
    <location>
        <position position="778"/>
    </location>
</feature>
<dbReference type="EC" id="7.1.2.1" evidence="17"/>
<dbReference type="EMBL" id="M24107">
    <property type="protein sequence ID" value="AAA32813.1"/>
    <property type="molecule type" value="mRNA"/>
</dbReference>
<dbReference type="EMBL" id="AC003673">
    <property type="protein sequence ID" value="AAC09030.1"/>
    <property type="molecule type" value="Genomic_DNA"/>
</dbReference>
<dbReference type="EMBL" id="CP002685">
    <property type="protein sequence ID" value="AEC06832.1"/>
    <property type="molecule type" value="Genomic_DNA"/>
</dbReference>
<dbReference type="EMBL" id="BT008692">
    <property type="protein sequence ID" value="AAP40498.1"/>
    <property type="molecule type" value="mRNA"/>
</dbReference>
<dbReference type="PIR" id="T01624">
    <property type="entry name" value="PXMUP1"/>
</dbReference>
<dbReference type="RefSeq" id="NP_179486.1">
    <property type="nucleotide sequence ID" value="NM_127453.4"/>
</dbReference>
<dbReference type="SMR" id="P20649"/>
<dbReference type="BioGRID" id="1770">
    <property type="interactions" value="16"/>
</dbReference>
<dbReference type="FunCoup" id="P20649">
    <property type="interactions" value="1615"/>
</dbReference>
<dbReference type="IntAct" id="P20649">
    <property type="interactions" value="4"/>
</dbReference>
<dbReference type="MINT" id="P20649"/>
<dbReference type="STRING" id="3702.P20649"/>
<dbReference type="TCDB" id="3.A.3.3.7">
    <property type="family name" value="the p-type atpase (p-atpase) superfamily"/>
</dbReference>
<dbReference type="GlyGen" id="P20649">
    <property type="glycosylation" value="1 site"/>
</dbReference>
<dbReference type="iPTMnet" id="P20649"/>
<dbReference type="SwissPalm" id="P20649"/>
<dbReference type="PaxDb" id="3702-AT2G18960.1"/>
<dbReference type="ProteomicsDB" id="234928"/>
<dbReference type="EnsemblPlants" id="AT2G18960.1">
    <property type="protein sequence ID" value="AT2G18960.1"/>
    <property type="gene ID" value="AT2G18960"/>
</dbReference>
<dbReference type="GeneID" id="816413"/>
<dbReference type="Gramene" id="AT2G18960.1">
    <property type="protein sequence ID" value="AT2G18960.1"/>
    <property type="gene ID" value="AT2G18960"/>
</dbReference>
<dbReference type="KEGG" id="ath:AT2G18960"/>
<dbReference type="Araport" id="AT2G18960"/>
<dbReference type="TAIR" id="AT2G18960">
    <property type="gene designation" value="HA1"/>
</dbReference>
<dbReference type="eggNOG" id="KOG0205">
    <property type="taxonomic scope" value="Eukaryota"/>
</dbReference>
<dbReference type="HOGENOM" id="CLU_002360_6_4_1"/>
<dbReference type="InParanoid" id="P20649"/>
<dbReference type="OrthoDB" id="116380at2759"/>
<dbReference type="PhylomeDB" id="P20649"/>
<dbReference type="BioCyc" id="ARA:AT2G18960-MONOMER"/>
<dbReference type="BRENDA" id="7.1.2.1">
    <property type="organism ID" value="399"/>
</dbReference>
<dbReference type="CD-CODE" id="4299E36E">
    <property type="entry name" value="Nucleolus"/>
</dbReference>
<dbReference type="PRO" id="PR:P20649"/>
<dbReference type="Proteomes" id="UP000006548">
    <property type="component" value="Chromosome 2"/>
</dbReference>
<dbReference type="ExpressionAtlas" id="P20649">
    <property type="expression patterns" value="baseline and differential"/>
</dbReference>
<dbReference type="GO" id="GO:0005794">
    <property type="term" value="C:Golgi apparatus"/>
    <property type="evidence" value="ECO:0007005"/>
    <property type="project" value="TAIR"/>
</dbReference>
<dbReference type="GO" id="GO:0016020">
    <property type="term" value="C:membrane"/>
    <property type="evidence" value="ECO:0000314"/>
    <property type="project" value="UniProtKB"/>
</dbReference>
<dbReference type="GO" id="GO:0000325">
    <property type="term" value="C:plant-type vacuole"/>
    <property type="evidence" value="ECO:0007005"/>
    <property type="project" value="TAIR"/>
</dbReference>
<dbReference type="GO" id="GO:0005886">
    <property type="term" value="C:plasma membrane"/>
    <property type="evidence" value="ECO:0007005"/>
    <property type="project" value="TAIR"/>
</dbReference>
<dbReference type="GO" id="GO:0009506">
    <property type="term" value="C:plasmodesma"/>
    <property type="evidence" value="ECO:0007005"/>
    <property type="project" value="TAIR"/>
</dbReference>
<dbReference type="GO" id="GO:0005524">
    <property type="term" value="F:ATP binding"/>
    <property type="evidence" value="ECO:0007669"/>
    <property type="project" value="UniProtKB-KW"/>
</dbReference>
<dbReference type="GO" id="GO:0016887">
    <property type="term" value="F:ATP hydrolysis activity"/>
    <property type="evidence" value="ECO:0000315"/>
    <property type="project" value="TAIR"/>
</dbReference>
<dbReference type="GO" id="GO:0000287">
    <property type="term" value="F:magnesium ion binding"/>
    <property type="evidence" value="ECO:0000314"/>
    <property type="project" value="UniProtKB"/>
</dbReference>
<dbReference type="GO" id="GO:0008553">
    <property type="term" value="F:P-type proton-exporting transporter activity"/>
    <property type="evidence" value="ECO:0000314"/>
    <property type="project" value="UniProtKB"/>
</dbReference>
<dbReference type="GO" id="GO:0120029">
    <property type="term" value="P:proton export across plasma membrane"/>
    <property type="evidence" value="ECO:0007669"/>
    <property type="project" value="InterPro"/>
</dbReference>
<dbReference type="GO" id="GO:1902600">
    <property type="term" value="P:proton transmembrane transport"/>
    <property type="evidence" value="ECO:0000314"/>
    <property type="project" value="UniProtKB"/>
</dbReference>
<dbReference type="GO" id="GO:0010119">
    <property type="term" value="P:regulation of stomatal movement"/>
    <property type="evidence" value="ECO:0000315"/>
    <property type="project" value="TAIR"/>
</dbReference>
<dbReference type="GO" id="GO:0009737">
    <property type="term" value="P:response to abscisic acid"/>
    <property type="evidence" value="ECO:0000315"/>
    <property type="project" value="TAIR"/>
</dbReference>
<dbReference type="GO" id="GO:0009414">
    <property type="term" value="P:response to water deprivation"/>
    <property type="evidence" value="ECO:0000315"/>
    <property type="project" value="TAIR"/>
</dbReference>
<dbReference type="GO" id="GO:1990069">
    <property type="term" value="P:stomatal opening"/>
    <property type="evidence" value="ECO:0000315"/>
    <property type="project" value="TAIR"/>
</dbReference>
<dbReference type="CDD" id="cd02076">
    <property type="entry name" value="P-type_ATPase_H"/>
    <property type="match status" value="1"/>
</dbReference>
<dbReference type="FunFam" id="1.20.1110.10:FF:000045">
    <property type="entry name" value="ATPase 4 plasma membrane-type"/>
    <property type="match status" value="1"/>
</dbReference>
<dbReference type="FunFam" id="2.70.150.10:FF:000004">
    <property type="entry name" value="Plasma membrane ATPase"/>
    <property type="match status" value="1"/>
</dbReference>
<dbReference type="FunFam" id="3.40.1110.10:FF:000004">
    <property type="entry name" value="Plasma membrane ATPase"/>
    <property type="match status" value="1"/>
</dbReference>
<dbReference type="FunFam" id="3.40.50.1000:FF:000211">
    <property type="entry name" value="Plasma membrane ATPase"/>
    <property type="match status" value="1"/>
</dbReference>
<dbReference type="Gene3D" id="6.10.140.890">
    <property type="match status" value="1"/>
</dbReference>
<dbReference type="Gene3D" id="3.40.1110.10">
    <property type="entry name" value="Calcium-transporting ATPase, cytoplasmic domain N"/>
    <property type="match status" value="1"/>
</dbReference>
<dbReference type="Gene3D" id="2.70.150.10">
    <property type="entry name" value="Calcium-transporting ATPase, cytoplasmic transduction domain A"/>
    <property type="match status" value="1"/>
</dbReference>
<dbReference type="Gene3D" id="1.20.1110.10">
    <property type="entry name" value="Calcium-transporting ATPase, transmembrane domain"/>
    <property type="match status" value="1"/>
</dbReference>
<dbReference type="Gene3D" id="3.40.50.1000">
    <property type="entry name" value="HAD superfamily/HAD-like"/>
    <property type="match status" value="1"/>
</dbReference>
<dbReference type="InterPro" id="IPR004014">
    <property type="entry name" value="ATPase_P-typ_cation-transptr_N"/>
</dbReference>
<dbReference type="InterPro" id="IPR023299">
    <property type="entry name" value="ATPase_P-typ_cyto_dom_N"/>
</dbReference>
<dbReference type="InterPro" id="IPR018303">
    <property type="entry name" value="ATPase_P-typ_P_site"/>
</dbReference>
<dbReference type="InterPro" id="IPR023298">
    <property type="entry name" value="ATPase_P-typ_TM_dom_sf"/>
</dbReference>
<dbReference type="InterPro" id="IPR008250">
    <property type="entry name" value="ATPase_P-typ_transduc_dom_A_sf"/>
</dbReference>
<dbReference type="InterPro" id="IPR036412">
    <property type="entry name" value="HAD-like_sf"/>
</dbReference>
<dbReference type="InterPro" id="IPR023214">
    <property type="entry name" value="HAD_sf"/>
</dbReference>
<dbReference type="InterPro" id="IPR006534">
    <property type="entry name" value="P-type_ATPase_IIIA"/>
</dbReference>
<dbReference type="InterPro" id="IPR001757">
    <property type="entry name" value="P_typ_ATPase"/>
</dbReference>
<dbReference type="InterPro" id="IPR044492">
    <property type="entry name" value="P_typ_ATPase_HD_dom"/>
</dbReference>
<dbReference type="NCBIfam" id="TIGR01647">
    <property type="entry name" value="ATPase-IIIA_H"/>
    <property type="match status" value="1"/>
</dbReference>
<dbReference type="NCBIfam" id="TIGR01494">
    <property type="entry name" value="ATPase_P-type"/>
    <property type="match status" value="2"/>
</dbReference>
<dbReference type="PANTHER" id="PTHR42861">
    <property type="entry name" value="CALCIUM-TRANSPORTING ATPASE"/>
    <property type="match status" value="1"/>
</dbReference>
<dbReference type="Pfam" id="PF00690">
    <property type="entry name" value="Cation_ATPase_N"/>
    <property type="match status" value="1"/>
</dbReference>
<dbReference type="Pfam" id="PF00122">
    <property type="entry name" value="E1-E2_ATPase"/>
    <property type="match status" value="1"/>
</dbReference>
<dbReference type="Pfam" id="PF00702">
    <property type="entry name" value="Hydrolase"/>
    <property type="match status" value="1"/>
</dbReference>
<dbReference type="PRINTS" id="PR00119">
    <property type="entry name" value="CATATPASE"/>
</dbReference>
<dbReference type="PRINTS" id="PR00120">
    <property type="entry name" value="HATPASE"/>
</dbReference>
<dbReference type="SFLD" id="SFLDG00002">
    <property type="entry name" value="C1.7:_P-type_atpase_like"/>
    <property type="match status" value="1"/>
</dbReference>
<dbReference type="SFLD" id="SFLDF00027">
    <property type="entry name" value="p-type_atpase"/>
    <property type="match status" value="1"/>
</dbReference>
<dbReference type="SMART" id="SM00831">
    <property type="entry name" value="Cation_ATPase_N"/>
    <property type="match status" value="1"/>
</dbReference>
<dbReference type="SUPFAM" id="SSF81653">
    <property type="entry name" value="Calcium ATPase, transduction domain A"/>
    <property type="match status" value="1"/>
</dbReference>
<dbReference type="SUPFAM" id="SSF81665">
    <property type="entry name" value="Calcium ATPase, transmembrane domain M"/>
    <property type="match status" value="1"/>
</dbReference>
<dbReference type="SUPFAM" id="SSF56784">
    <property type="entry name" value="HAD-like"/>
    <property type="match status" value="1"/>
</dbReference>
<dbReference type="PROSITE" id="PS00154">
    <property type="entry name" value="ATPASE_E1_E2"/>
    <property type="match status" value="1"/>
</dbReference>
<evidence type="ECO:0000250" key="1"/>
<evidence type="ECO:0000250" key="2">
    <source>
        <dbReference type="UniProtKB" id="P19456"/>
    </source>
</evidence>
<evidence type="ECO:0000255" key="3"/>
<evidence type="ECO:0000269" key="4">
    <source>
    </source>
</evidence>
<evidence type="ECO:0000269" key="5">
    <source>
    </source>
</evidence>
<evidence type="ECO:0000269" key="6">
    <source>
    </source>
</evidence>
<evidence type="ECO:0000269" key="7">
    <source>
    </source>
</evidence>
<evidence type="ECO:0000269" key="8">
    <source>
    </source>
</evidence>
<evidence type="ECO:0000269" key="9">
    <source>
    </source>
</evidence>
<evidence type="ECO:0000269" key="10">
    <source>
    </source>
</evidence>
<evidence type="ECO:0000269" key="11">
    <source>
    </source>
</evidence>
<evidence type="ECO:0000269" key="12">
    <source>
    </source>
</evidence>
<evidence type="ECO:0000303" key="13">
    <source>
    </source>
</evidence>
<evidence type="ECO:0000303" key="14">
    <source>
    </source>
</evidence>
<evidence type="ECO:0000303" key="15">
    <source>
    </source>
</evidence>
<evidence type="ECO:0000303" key="16">
    <source>
    </source>
</evidence>
<evidence type="ECO:0000305" key="17"/>
<evidence type="ECO:0000305" key="18">
    <source>
    </source>
</evidence>
<evidence type="ECO:0000305" key="19">
    <source>
    </source>
</evidence>
<evidence type="ECO:0000312" key="20">
    <source>
        <dbReference type="Araport" id="AT2G18960"/>
    </source>
</evidence>
<evidence type="ECO:0000312" key="21">
    <source>
        <dbReference type="EMBL" id="AAC09030.1"/>
    </source>
</evidence>
<evidence type="ECO:0007744" key="22">
    <source>
    </source>
</evidence>
<evidence type="ECO:0007744" key="23">
    <source>
    </source>
</evidence>
<name>PMA1_ARATH</name>
<proteinExistence type="evidence at protein level"/>
<comment type="function">
    <text evidence="10 11 12">The plasma membrane H(+) ATPase of plants and fungi generates a proton gradient that drives the active transport of nutrients by H(+)-symport (PubMed:26071421). The resulting external acidification and/or internal alkinization may mediate growth responses (PubMed:26071421). Forms a functional cation-translocating unit with CNGC17 that is activated by PSKR1/BAK1 and possibly other BAK1/RLK complexes (PubMed:26071421). Promotes stomatal opening in response to blue light (PubMed:28358053, PubMed:31904040).</text>
</comment>
<comment type="catalytic activity">
    <reaction evidence="17">
        <text>ATP + H2O + H(+)(in) = ADP + phosphate + 2 H(+)(out)</text>
        <dbReference type="Rhea" id="RHEA:20852"/>
        <dbReference type="ChEBI" id="CHEBI:15377"/>
        <dbReference type="ChEBI" id="CHEBI:15378"/>
        <dbReference type="ChEBI" id="CHEBI:30616"/>
        <dbReference type="ChEBI" id="CHEBI:43474"/>
        <dbReference type="ChEBI" id="CHEBI:456216"/>
        <dbReference type="EC" id="7.1.2.1"/>
    </reaction>
</comment>
<comment type="activity regulation">
    <text evidence="11">Phosphorylation on Thr residues is repressed by tyrphostin 9, sphingosine, GW5074 and BML-265 (PubMed:28358053). By contrast, the fungal phytotoxin fusicoccin (FC) promotes phosphorylation of Thr-948 independently to BHP, thus leading to large stomatal opening (PubMed:28358053).</text>
</comment>
<comment type="subunit">
    <text evidence="1 4 6 8 9 10 11 12">Binds to 14-3-3 proteins. The binding is induced by phosphorylation of Thr-948. Binding to 14-3-3 proteins activates the H(+)-ATPase (By similarity). Interacts with PPI1; this interaction promotes ATPase activity. Interacts with PSY1R (PubMed:25267325). Part of a functional complex containing PSKR1, BAK1, CNGC17, and AHA (PubMed:26071421). Interacts with CNGC17 and PSKR1 (PubMed:26071421). Triggered by SAUR9 via the phosphorylation of the C-terminal autoinhibitory domain (PubMed:24858935). Interacts with AHA2 (PubMed:28358053). Binds to CBC1 and CBC2 (PubMed:31904040).</text>
</comment>
<comment type="interaction">
    <interactant intactId="EBI-2354448">
        <id>P20649</id>
    </interactant>
    <interactant intactId="EBI-2354477">
        <id>O23144</id>
        <label>PPI1</label>
    </interactant>
    <organismsDiffer>false</organismsDiffer>
    <experiments>7</experiments>
</comment>
<comment type="subcellular location">
    <subcellularLocation>
        <location evidence="10 18">Cell membrane</location>
        <topology evidence="18">Multi-pass membrane protein</topology>
    </subcellularLocation>
</comment>
<comment type="tissue specificity">
    <text evidence="5">Expressed in guard cells, mesophyll cells, leaves and roots.</text>
</comment>
<comment type="developmental stage">
    <text evidence="7">Expressed on the surface of developing seeds and from 8- to 16-cell stages to the heart stage of embryo development.</text>
</comment>
<comment type="PTM">
    <text evidence="13 15 16">Phosphorylated, probably by PHOT1 and PHOT2, at C-terminal Thr-948 in guard cells in response to blue light to induce stomatal opening.</text>
</comment>
<comment type="disruption phenotype">
    <text evidence="7">No visible phenotype, due to the redudancy with AHA2. Aha1 and aha2 double mutants are embryo lethal.</text>
</comment>
<comment type="similarity">
    <text evidence="17">Belongs to the cation transport ATPase (P-type) (TC 3.A.3) family. Type IIIA subfamily.</text>
</comment>